<gene>
    <name evidence="1" type="primary">rnhB</name>
    <name type="ordered locus">STER_0920</name>
</gene>
<dbReference type="EC" id="3.1.26.4" evidence="1"/>
<dbReference type="EMBL" id="CP000419">
    <property type="protein sequence ID" value="ABJ66145.1"/>
    <property type="molecule type" value="Genomic_DNA"/>
</dbReference>
<dbReference type="RefSeq" id="WP_002950603.1">
    <property type="nucleotide sequence ID" value="NC_008532.1"/>
</dbReference>
<dbReference type="SMR" id="Q03KX7"/>
<dbReference type="KEGG" id="ste:STER_0920"/>
<dbReference type="HOGENOM" id="CLU_036532_2_1_9"/>
<dbReference type="GO" id="GO:0005737">
    <property type="term" value="C:cytoplasm"/>
    <property type="evidence" value="ECO:0007669"/>
    <property type="project" value="UniProtKB-SubCell"/>
</dbReference>
<dbReference type="GO" id="GO:0032299">
    <property type="term" value="C:ribonuclease H2 complex"/>
    <property type="evidence" value="ECO:0007669"/>
    <property type="project" value="TreeGrafter"/>
</dbReference>
<dbReference type="GO" id="GO:0030145">
    <property type="term" value="F:manganese ion binding"/>
    <property type="evidence" value="ECO:0007669"/>
    <property type="project" value="UniProtKB-UniRule"/>
</dbReference>
<dbReference type="GO" id="GO:0003723">
    <property type="term" value="F:RNA binding"/>
    <property type="evidence" value="ECO:0007669"/>
    <property type="project" value="InterPro"/>
</dbReference>
<dbReference type="GO" id="GO:0004523">
    <property type="term" value="F:RNA-DNA hybrid ribonuclease activity"/>
    <property type="evidence" value="ECO:0007669"/>
    <property type="project" value="UniProtKB-UniRule"/>
</dbReference>
<dbReference type="GO" id="GO:0043137">
    <property type="term" value="P:DNA replication, removal of RNA primer"/>
    <property type="evidence" value="ECO:0007669"/>
    <property type="project" value="TreeGrafter"/>
</dbReference>
<dbReference type="GO" id="GO:0006298">
    <property type="term" value="P:mismatch repair"/>
    <property type="evidence" value="ECO:0007669"/>
    <property type="project" value="TreeGrafter"/>
</dbReference>
<dbReference type="CDD" id="cd07182">
    <property type="entry name" value="RNase_HII_bacteria_HII_like"/>
    <property type="match status" value="1"/>
</dbReference>
<dbReference type="FunFam" id="3.30.420.10:FF:000006">
    <property type="entry name" value="Ribonuclease HII"/>
    <property type="match status" value="1"/>
</dbReference>
<dbReference type="Gene3D" id="3.30.420.10">
    <property type="entry name" value="Ribonuclease H-like superfamily/Ribonuclease H"/>
    <property type="match status" value="1"/>
</dbReference>
<dbReference type="HAMAP" id="MF_00052_B">
    <property type="entry name" value="RNase_HII_B"/>
    <property type="match status" value="1"/>
</dbReference>
<dbReference type="InterPro" id="IPR022898">
    <property type="entry name" value="RNase_HII"/>
</dbReference>
<dbReference type="InterPro" id="IPR001352">
    <property type="entry name" value="RNase_HII/HIII"/>
</dbReference>
<dbReference type="InterPro" id="IPR024567">
    <property type="entry name" value="RNase_HII/HIII_dom"/>
</dbReference>
<dbReference type="InterPro" id="IPR012337">
    <property type="entry name" value="RNaseH-like_sf"/>
</dbReference>
<dbReference type="InterPro" id="IPR036397">
    <property type="entry name" value="RNaseH_sf"/>
</dbReference>
<dbReference type="NCBIfam" id="NF000594">
    <property type="entry name" value="PRK00015.1-1"/>
    <property type="match status" value="1"/>
</dbReference>
<dbReference type="NCBIfam" id="NF000595">
    <property type="entry name" value="PRK00015.1-3"/>
    <property type="match status" value="1"/>
</dbReference>
<dbReference type="PANTHER" id="PTHR10954">
    <property type="entry name" value="RIBONUCLEASE H2 SUBUNIT A"/>
    <property type="match status" value="1"/>
</dbReference>
<dbReference type="PANTHER" id="PTHR10954:SF18">
    <property type="entry name" value="RIBONUCLEASE HII"/>
    <property type="match status" value="1"/>
</dbReference>
<dbReference type="Pfam" id="PF01351">
    <property type="entry name" value="RNase_HII"/>
    <property type="match status" value="1"/>
</dbReference>
<dbReference type="SUPFAM" id="SSF53098">
    <property type="entry name" value="Ribonuclease H-like"/>
    <property type="match status" value="1"/>
</dbReference>
<dbReference type="PROSITE" id="PS51975">
    <property type="entry name" value="RNASE_H_2"/>
    <property type="match status" value="1"/>
</dbReference>
<name>RNH2_STRTD</name>
<comment type="function">
    <text evidence="1">Endonuclease that specifically degrades the RNA of RNA-DNA hybrids.</text>
</comment>
<comment type="catalytic activity">
    <reaction evidence="1">
        <text>Endonucleolytic cleavage to 5'-phosphomonoester.</text>
        <dbReference type="EC" id="3.1.26.4"/>
    </reaction>
</comment>
<comment type="cofactor">
    <cofactor evidence="1">
        <name>Mn(2+)</name>
        <dbReference type="ChEBI" id="CHEBI:29035"/>
    </cofactor>
    <cofactor evidence="1">
        <name>Mg(2+)</name>
        <dbReference type="ChEBI" id="CHEBI:18420"/>
    </cofactor>
    <text evidence="1">Manganese or magnesium. Binds 1 divalent metal ion per monomer in the absence of substrate. May bind a second metal ion after substrate binding.</text>
</comment>
<comment type="subcellular location">
    <subcellularLocation>
        <location evidence="1">Cytoplasm</location>
    </subcellularLocation>
</comment>
<comment type="similarity">
    <text evidence="1">Belongs to the RNase HII family.</text>
</comment>
<reference key="1">
    <citation type="journal article" date="2006" name="Proc. Natl. Acad. Sci. U.S.A.">
        <title>Comparative genomics of the lactic acid bacteria.</title>
        <authorList>
            <person name="Makarova K.S."/>
            <person name="Slesarev A."/>
            <person name="Wolf Y.I."/>
            <person name="Sorokin A."/>
            <person name="Mirkin B."/>
            <person name="Koonin E.V."/>
            <person name="Pavlov A."/>
            <person name="Pavlova N."/>
            <person name="Karamychev V."/>
            <person name="Polouchine N."/>
            <person name="Shakhova V."/>
            <person name="Grigoriev I."/>
            <person name="Lou Y."/>
            <person name="Rohksar D."/>
            <person name="Lucas S."/>
            <person name="Huang K."/>
            <person name="Goodstein D.M."/>
            <person name="Hawkins T."/>
            <person name="Plengvidhya V."/>
            <person name="Welker D."/>
            <person name="Hughes J."/>
            <person name="Goh Y."/>
            <person name="Benson A."/>
            <person name="Baldwin K."/>
            <person name="Lee J.-H."/>
            <person name="Diaz-Muniz I."/>
            <person name="Dosti B."/>
            <person name="Smeianov V."/>
            <person name="Wechter W."/>
            <person name="Barabote R."/>
            <person name="Lorca G."/>
            <person name="Altermann E."/>
            <person name="Barrangou R."/>
            <person name="Ganesan B."/>
            <person name="Xie Y."/>
            <person name="Rawsthorne H."/>
            <person name="Tamir D."/>
            <person name="Parker C."/>
            <person name="Breidt F."/>
            <person name="Broadbent J.R."/>
            <person name="Hutkins R."/>
            <person name="O'Sullivan D."/>
            <person name="Steele J."/>
            <person name="Unlu G."/>
            <person name="Saier M.H. Jr."/>
            <person name="Klaenhammer T."/>
            <person name="Richardson P."/>
            <person name="Kozyavkin S."/>
            <person name="Weimer B.C."/>
            <person name="Mills D.A."/>
        </authorList>
    </citation>
    <scope>NUCLEOTIDE SEQUENCE [LARGE SCALE GENOMIC DNA]</scope>
    <source>
        <strain>ATCC BAA-491 / LMD-9</strain>
    </source>
</reference>
<accession>Q03KX7</accession>
<proteinExistence type="inferred from homology"/>
<protein>
    <recommendedName>
        <fullName evidence="1">Ribonuclease HII</fullName>
        <shortName evidence="1">RNase HII</shortName>
        <ecNumber evidence="1">3.1.26.4</ecNumber>
    </recommendedName>
</protein>
<evidence type="ECO:0000255" key="1">
    <source>
        <dbReference type="HAMAP-Rule" id="MF_00052"/>
    </source>
</evidence>
<evidence type="ECO:0000255" key="2">
    <source>
        <dbReference type="PROSITE-ProRule" id="PRU01319"/>
    </source>
</evidence>
<keyword id="KW-0963">Cytoplasm</keyword>
<keyword id="KW-0255">Endonuclease</keyword>
<keyword id="KW-0378">Hydrolase</keyword>
<keyword id="KW-0464">Manganese</keyword>
<keyword id="KW-0479">Metal-binding</keyword>
<keyword id="KW-0540">Nuclease</keyword>
<feature type="chain" id="PRO_0000334961" description="Ribonuclease HII">
    <location>
        <begin position="1"/>
        <end position="255"/>
    </location>
</feature>
<feature type="domain" description="RNase H type-2" evidence="2">
    <location>
        <begin position="70"/>
        <end position="255"/>
    </location>
</feature>
<feature type="binding site" evidence="1">
    <location>
        <position position="76"/>
    </location>
    <ligand>
        <name>a divalent metal cation</name>
        <dbReference type="ChEBI" id="CHEBI:60240"/>
    </ligand>
</feature>
<feature type="binding site" evidence="1">
    <location>
        <position position="77"/>
    </location>
    <ligand>
        <name>a divalent metal cation</name>
        <dbReference type="ChEBI" id="CHEBI:60240"/>
    </ligand>
</feature>
<feature type="binding site" evidence="1">
    <location>
        <position position="168"/>
    </location>
    <ligand>
        <name>a divalent metal cation</name>
        <dbReference type="ChEBI" id="CHEBI:60240"/>
    </ligand>
</feature>
<sequence>MATIKEVKEQLAILRDLDDPRWASFEEDSRTGVQAAIRKRRKAILAELAEEERLETLLNYEKSLYARGIELIAGVDEVGRGPLAGPVVAAAVILPKLCKIKGLNDSKKIPKSKHEAIYNQVMKEAVAVGIGIKDNYVIDDVNIYEATKLAMIEAIEKLNPQPEHLLIDAMNLDLPIEQTSIIKGDANSLSIAAASIVAKVTRDKMMADYEQEFPGYAFAKNAGYGTKEHLSGIDKFGVTPIHRRSFEPIKSIIKK</sequence>
<organism>
    <name type="scientific">Streptococcus thermophilus (strain ATCC BAA-491 / LMD-9)</name>
    <dbReference type="NCBI Taxonomy" id="322159"/>
    <lineage>
        <taxon>Bacteria</taxon>
        <taxon>Bacillati</taxon>
        <taxon>Bacillota</taxon>
        <taxon>Bacilli</taxon>
        <taxon>Lactobacillales</taxon>
        <taxon>Streptococcaceae</taxon>
        <taxon>Streptococcus</taxon>
    </lineage>
</organism>